<sequence>MTKEQIIEAVKSMTVLELNDLVKAIEEEFGVTAAAPVAVAGGAGEAAAEKTEFDVELTSAGAQKIKVIKVVREITGLGLKEAKELVDNTPKVIKEAAAKEEAEEIKAKLEEVGAAVEVK</sequence>
<protein>
    <recommendedName>
        <fullName evidence="1">Large ribosomal subunit protein bL12</fullName>
    </recommendedName>
    <alternativeName>
        <fullName evidence="2">50S ribosomal protein L7/L12</fullName>
    </alternativeName>
</protein>
<gene>
    <name evidence="1" type="primary">rplL</name>
    <name type="ordered locus">BC_0120</name>
</gene>
<organism>
    <name type="scientific">Bacillus cereus (strain ATCC 14579 / DSM 31 / CCUG 7414 / JCM 2152 / NBRC 15305 / NCIMB 9373 / NCTC 2599 / NRRL B-3711)</name>
    <dbReference type="NCBI Taxonomy" id="226900"/>
    <lineage>
        <taxon>Bacteria</taxon>
        <taxon>Bacillati</taxon>
        <taxon>Bacillota</taxon>
        <taxon>Bacilli</taxon>
        <taxon>Bacillales</taxon>
        <taxon>Bacillaceae</taxon>
        <taxon>Bacillus</taxon>
        <taxon>Bacillus cereus group</taxon>
    </lineage>
</organism>
<reference key="1">
    <citation type="journal article" date="2003" name="Nature">
        <title>Genome sequence of Bacillus cereus and comparative analysis with Bacillus anthracis.</title>
        <authorList>
            <person name="Ivanova N."/>
            <person name="Sorokin A."/>
            <person name="Anderson I."/>
            <person name="Galleron N."/>
            <person name="Candelon B."/>
            <person name="Kapatral V."/>
            <person name="Bhattacharyya A."/>
            <person name="Reznik G."/>
            <person name="Mikhailova N."/>
            <person name="Lapidus A."/>
            <person name="Chu L."/>
            <person name="Mazur M."/>
            <person name="Goltsman E."/>
            <person name="Larsen N."/>
            <person name="D'Souza M."/>
            <person name="Walunas T."/>
            <person name="Grechkin Y."/>
            <person name="Pusch G."/>
            <person name="Haselkorn R."/>
            <person name="Fonstein M."/>
            <person name="Ehrlich S.D."/>
            <person name="Overbeek R."/>
            <person name="Kyrpides N.C."/>
        </authorList>
    </citation>
    <scope>NUCLEOTIDE SEQUENCE [LARGE SCALE GENOMIC DNA]</scope>
    <source>
        <strain>ATCC 14579 / DSM 31 / CCUG 7414 / JCM 2152 / NBRC 15305 / NCIMB 9373 / NCTC 2599 / NRRL B-3711</strain>
    </source>
</reference>
<proteinExistence type="inferred from homology"/>
<dbReference type="EMBL" id="AE016877">
    <property type="protein sequence ID" value="AAP07202.1"/>
    <property type="molecule type" value="Genomic_DNA"/>
</dbReference>
<dbReference type="RefSeq" id="NP_830001.1">
    <property type="nucleotide sequence ID" value="NC_004722.1"/>
</dbReference>
<dbReference type="RefSeq" id="WP_000159736.1">
    <property type="nucleotide sequence ID" value="NZ_CP138336.1"/>
</dbReference>
<dbReference type="SMR" id="Q81J50"/>
<dbReference type="STRING" id="226900.BC_0120"/>
<dbReference type="MetOSite" id="Q81J50"/>
<dbReference type="GeneID" id="93010953"/>
<dbReference type="KEGG" id="bce:BC0120"/>
<dbReference type="PATRIC" id="fig|226900.8.peg.122"/>
<dbReference type="HOGENOM" id="CLU_086499_3_2_9"/>
<dbReference type="OrthoDB" id="9811748at2"/>
<dbReference type="Proteomes" id="UP000001417">
    <property type="component" value="Chromosome"/>
</dbReference>
<dbReference type="GO" id="GO:0022625">
    <property type="term" value="C:cytosolic large ribosomal subunit"/>
    <property type="evidence" value="ECO:0000318"/>
    <property type="project" value="GO_Central"/>
</dbReference>
<dbReference type="GO" id="GO:0003729">
    <property type="term" value="F:mRNA binding"/>
    <property type="evidence" value="ECO:0000318"/>
    <property type="project" value="GO_Central"/>
</dbReference>
<dbReference type="GO" id="GO:0003735">
    <property type="term" value="F:structural constituent of ribosome"/>
    <property type="evidence" value="ECO:0000318"/>
    <property type="project" value="GO_Central"/>
</dbReference>
<dbReference type="GO" id="GO:0006412">
    <property type="term" value="P:translation"/>
    <property type="evidence" value="ECO:0000318"/>
    <property type="project" value="GO_Central"/>
</dbReference>
<dbReference type="CDD" id="cd00387">
    <property type="entry name" value="Ribosomal_L7_L12"/>
    <property type="match status" value="1"/>
</dbReference>
<dbReference type="FunFam" id="1.20.5.710:FF:000002">
    <property type="entry name" value="50S ribosomal protein L7/L12"/>
    <property type="match status" value="1"/>
</dbReference>
<dbReference type="FunFam" id="3.30.1390.10:FF:000001">
    <property type="entry name" value="50S ribosomal protein L7/L12"/>
    <property type="match status" value="1"/>
</dbReference>
<dbReference type="Gene3D" id="3.30.1390.10">
    <property type="match status" value="1"/>
</dbReference>
<dbReference type="Gene3D" id="1.20.5.710">
    <property type="entry name" value="Single helix bin"/>
    <property type="match status" value="1"/>
</dbReference>
<dbReference type="HAMAP" id="MF_00368">
    <property type="entry name" value="Ribosomal_bL12"/>
    <property type="match status" value="1"/>
</dbReference>
<dbReference type="InterPro" id="IPR000206">
    <property type="entry name" value="Ribosomal_bL12"/>
</dbReference>
<dbReference type="InterPro" id="IPR013823">
    <property type="entry name" value="Ribosomal_bL12_C"/>
</dbReference>
<dbReference type="InterPro" id="IPR014719">
    <property type="entry name" value="Ribosomal_bL12_C/ClpS-like"/>
</dbReference>
<dbReference type="InterPro" id="IPR008932">
    <property type="entry name" value="Ribosomal_bL12_oligo"/>
</dbReference>
<dbReference type="InterPro" id="IPR036235">
    <property type="entry name" value="Ribosomal_bL12_oligo_N_sf"/>
</dbReference>
<dbReference type="NCBIfam" id="TIGR00855">
    <property type="entry name" value="L12"/>
    <property type="match status" value="1"/>
</dbReference>
<dbReference type="PANTHER" id="PTHR45987">
    <property type="entry name" value="39S RIBOSOMAL PROTEIN L12"/>
    <property type="match status" value="1"/>
</dbReference>
<dbReference type="PANTHER" id="PTHR45987:SF4">
    <property type="entry name" value="LARGE RIBOSOMAL SUBUNIT PROTEIN BL12M"/>
    <property type="match status" value="1"/>
</dbReference>
<dbReference type="Pfam" id="PF00542">
    <property type="entry name" value="Ribosomal_L12"/>
    <property type="match status" value="1"/>
</dbReference>
<dbReference type="Pfam" id="PF16320">
    <property type="entry name" value="Ribosomal_L12_N"/>
    <property type="match status" value="1"/>
</dbReference>
<dbReference type="SUPFAM" id="SSF54736">
    <property type="entry name" value="ClpS-like"/>
    <property type="match status" value="1"/>
</dbReference>
<dbReference type="SUPFAM" id="SSF48300">
    <property type="entry name" value="Ribosomal protein L7/12, oligomerisation (N-terminal) domain"/>
    <property type="match status" value="1"/>
</dbReference>
<accession>Q81J50</accession>
<keyword id="KW-1185">Reference proteome</keyword>
<keyword id="KW-0687">Ribonucleoprotein</keyword>
<keyword id="KW-0689">Ribosomal protein</keyword>
<evidence type="ECO:0000255" key="1">
    <source>
        <dbReference type="HAMAP-Rule" id="MF_00368"/>
    </source>
</evidence>
<evidence type="ECO:0000305" key="2"/>
<name>RL7_BACCR</name>
<feature type="chain" id="PRO_0000243380" description="Large ribosomal subunit protein bL12">
    <location>
        <begin position="1"/>
        <end position="119"/>
    </location>
</feature>
<comment type="function">
    <text evidence="1">Forms part of the ribosomal stalk which helps the ribosome interact with GTP-bound translation factors. Is thus essential for accurate translation.</text>
</comment>
<comment type="subunit">
    <text evidence="1">Homodimer. Part of the ribosomal stalk of the 50S ribosomal subunit. Forms a multimeric L10(L12)X complex, where L10 forms an elongated spine to which 2 to 4 L12 dimers bind in a sequential fashion. Binds GTP-bound translation factors.</text>
</comment>
<comment type="similarity">
    <text evidence="1">Belongs to the bacterial ribosomal protein bL12 family.</text>
</comment>